<protein>
    <recommendedName>
        <fullName evidence="1">Small ribosomal subunit protein uS5</fullName>
    </recommendedName>
    <alternativeName>
        <fullName evidence="2">30S ribosomal protein S5</fullName>
    </alternativeName>
</protein>
<feature type="chain" id="PRO_1000140904" description="Small ribosomal subunit protein uS5">
    <location>
        <begin position="1"/>
        <end position="166"/>
    </location>
</feature>
<feature type="domain" description="S5 DRBM" evidence="1">
    <location>
        <begin position="11"/>
        <end position="74"/>
    </location>
</feature>
<organism>
    <name type="scientific">Aliivibrio fischeri (strain MJ11)</name>
    <name type="common">Vibrio fischeri</name>
    <dbReference type="NCBI Taxonomy" id="388396"/>
    <lineage>
        <taxon>Bacteria</taxon>
        <taxon>Pseudomonadati</taxon>
        <taxon>Pseudomonadota</taxon>
        <taxon>Gammaproteobacteria</taxon>
        <taxon>Vibrionales</taxon>
        <taxon>Vibrionaceae</taxon>
        <taxon>Aliivibrio</taxon>
    </lineage>
</organism>
<gene>
    <name evidence="1" type="primary">rpsE</name>
    <name type="ordered locus">VFMJ11_0242</name>
</gene>
<name>RS5_ALIFM</name>
<evidence type="ECO:0000255" key="1">
    <source>
        <dbReference type="HAMAP-Rule" id="MF_01307"/>
    </source>
</evidence>
<evidence type="ECO:0000305" key="2"/>
<reference key="1">
    <citation type="submission" date="2008-08" db="EMBL/GenBank/DDBJ databases">
        <title>Complete sequence of Vibrio fischeri strain MJ11.</title>
        <authorList>
            <person name="Mandel M.J."/>
            <person name="Stabb E.V."/>
            <person name="Ruby E.G."/>
            <person name="Ferriera S."/>
            <person name="Johnson J."/>
            <person name="Kravitz S."/>
            <person name="Beeson K."/>
            <person name="Sutton G."/>
            <person name="Rogers Y.-H."/>
            <person name="Friedman R."/>
            <person name="Frazier M."/>
            <person name="Venter J.C."/>
        </authorList>
    </citation>
    <scope>NUCLEOTIDE SEQUENCE [LARGE SCALE GENOMIC DNA]</scope>
    <source>
        <strain>MJ11</strain>
    </source>
</reference>
<dbReference type="EMBL" id="CP001139">
    <property type="protein sequence ID" value="ACH64838.1"/>
    <property type="molecule type" value="Genomic_DNA"/>
</dbReference>
<dbReference type="RefSeq" id="WP_005417255.1">
    <property type="nucleotide sequence ID" value="NC_011184.1"/>
</dbReference>
<dbReference type="SMR" id="B5FG26"/>
<dbReference type="GeneID" id="54162875"/>
<dbReference type="KEGG" id="vfm:VFMJ11_0242"/>
<dbReference type="HOGENOM" id="CLU_065898_2_2_6"/>
<dbReference type="Proteomes" id="UP000001857">
    <property type="component" value="Chromosome I"/>
</dbReference>
<dbReference type="GO" id="GO:0015935">
    <property type="term" value="C:small ribosomal subunit"/>
    <property type="evidence" value="ECO:0007669"/>
    <property type="project" value="InterPro"/>
</dbReference>
<dbReference type="GO" id="GO:0019843">
    <property type="term" value="F:rRNA binding"/>
    <property type="evidence" value="ECO:0007669"/>
    <property type="project" value="UniProtKB-UniRule"/>
</dbReference>
<dbReference type="GO" id="GO:0003735">
    <property type="term" value="F:structural constituent of ribosome"/>
    <property type="evidence" value="ECO:0007669"/>
    <property type="project" value="InterPro"/>
</dbReference>
<dbReference type="GO" id="GO:0006412">
    <property type="term" value="P:translation"/>
    <property type="evidence" value="ECO:0007669"/>
    <property type="project" value="UniProtKB-UniRule"/>
</dbReference>
<dbReference type="FunFam" id="3.30.160.20:FF:000001">
    <property type="entry name" value="30S ribosomal protein S5"/>
    <property type="match status" value="1"/>
</dbReference>
<dbReference type="FunFam" id="3.30.230.10:FF:000002">
    <property type="entry name" value="30S ribosomal protein S5"/>
    <property type="match status" value="1"/>
</dbReference>
<dbReference type="Gene3D" id="3.30.160.20">
    <property type="match status" value="1"/>
</dbReference>
<dbReference type="Gene3D" id="3.30.230.10">
    <property type="match status" value="1"/>
</dbReference>
<dbReference type="HAMAP" id="MF_01307_B">
    <property type="entry name" value="Ribosomal_uS5_B"/>
    <property type="match status" value="1"/>
</dbReference>
<dbReference type="InterPro" id="IPR020568">
    <property type="entry name" value="Ribosomal_Su5_D2-typ_SF"/>
</dbReference>
<dbReference type="InterPro" id="IPR000851">
    <property type="entry name" value="Ribosomal_uS5"/>
</dbReference>
<dbReference type="InterPro" id="IPR005712">
    <property type="entry name" value="Ribosomal_uS5_bac-type"/>
</dbReference>
<dbReference type="InterPro" id="IPR005324">
    <property type="entry name" value="Ribosomal_uS5_C"/>
</dbReference>
<dbReference type="InterPro" id="IPR013810">
    <property type="entry name" value="Ribosomal_uS5_N"/>
</dbReference>
<dbReference type="InterPro" id="IPR018192">
    <property type="entry name" value="Ribosomal_uS5_N_CS"/>
</dbReference>
<dbReference type="InterPro" id="IPR014721">
    <property type="entry name" value="Ribsml_uS5_D2-typ_fold_subgr"/>
</dbReference>
<dbReference type="NCBIfam" id="TIGR01021">
    <property type="entry name" value="rpsE_bact"/>
    <property type="match status" value="1"/>
</dbReference>
<dbReference type="PANTHER" id="PTHR48277">
    <property type="entry name" value="MITOCHONDRIAL RIBOSOMAL PROTEIN S5"/>
    <property type="match status" value="1"/>
</dbReference>
<dbReference type="PANTHER" id="PTHR48277:SF1">
    <property type="entry name" value="MITOCHONDRIAL RIBOSOMAL PROTEIN S5"/>
    <property type="match status" value="1"/>
</dbReference>
<dbReference type="Pfam" id="PF00333">
    <property type="entry name" value="Ribosomal_S5"/>
    <property type="match status" value="1"/>
</dbReference>
<dbReference type="Pfam" id="PF03719">
    <property type="entry name" value="Ribosomal_S5_C"/>
    <property type="match status" value="1"/>
</dbReference>
<dbReference type="SUPFAM" id="SSF54768">
    <property type="entry name" value="dsRNA-binding domain-like"/>
    <property type="match status" value="1"/>
</dbReference>
<dbReference type="SUPFAM" id="SSF54211">
    <property type="entry name" value="Ribosomal protein S5 domain 2-like"/>
    <property type="match status" value="1"/>
</dbReference>
<dbReference type="PROSITE" id="PS00585">
    <property type="entry name" value="RIBOSOMAL_S5"/>
    <property type="match status" value="1"/>
</dbReference>
<dbReference type="PROSITE" id="PS50881">
    <property type="entry name" value="S5_DSRBD"/>
    <property type="match status" value="1"/>
</dbReference>
<accession>B5FG26</accession>
<proteinExistence type="inferred from homology"/>
<sequence length="166" mass="17494">MAKEQQQATDLNEKLIAVNRVSKTVKGGRIFSFTALTVVGDGNGRVGFGYGKAREVPAAIQKSMEKARRNMFTIALNEGTLHHAVKGRHTGSKVYMQPAAEGTGIIAGGAMRAVLEVVGVRNVLAKAYGSTNPINVVRATIAGLSSVKSPEMVAAKRGLTVESISE</sequence>
<keyword id="KW-0687">Ribonucleoprotein</keyword>
<keyword id="KW-0689">Ribosomal protein</keyword>
<keyword id="KW-0694">RNA-binding</keyword>
<keyword id="KW-0699">rRNA-binding</keyword>
<comment type="function">
    <text evidence="1">With S4 and S12 plays an important role in translational accuracy.</text>
</comment>
<comment type="function">
    <text evidence="1">Located at the back of the 30S subunit body where it stabilizes the conformation of the head with respect to the body.</text>
</comment>
<comment type="subunit">
    <text evidence="1">Part of the 30S ribosomal subunit. Contacts proteins S4 and S8.</text>
</comment>
<comment type="domain">
    <text>The N-terminal domain interacts with the head of the 30S subunit; the C-terminal domain interacts with the body and contacts protein S4. The interaction surface between S4 and S5 is involved in control of translational fidelity.</text>
</comment>
<comment type="similarity">
    <text evidence="1">Belongs to the universal ribosomal protein uS5 family.</text>
</comment>